<accession>B1KG89</accession>
<feature type="chain" id="PRO_1000114117" description="Aminomethyltransferase">
    <location>
        <begin position="1"/>
        <end position="364"/>
    </location>
</feature>
<proteinExistence type="inferred from homology"/>
<name>GCST_SHEWM</name>
<keyword id="KW-0032">Aminotransferase</keyword>
<keyword id="KW-1185">Reference proteome</keyword>
<keyword id="KW-0808">Transferase</keyword>
<gene>
    <name evidence="1" type="primary">gcvT</name>
    <name type="ordered locus">Swoo_3969</name>
</gene>
<comment type="function">
    <text evidence="1">The glycine cleavage system catalyzes the degradation of glycine.</text>
</comment>
<comment type="catalytic activity">
    <reaction evidence="1">
        <text>N(6)-[(R)-S(8)-aminomethyldihydrolipoyl]-L-lysyl-[protein] + (6S)-5,6,7,8-tetrahydrofolate = N(6)-[(R)-dihydrolipoyl]-L-lysyl-[protein] + (6R)-5,10-methylene-5,6,7,8-tetrahydrofolate + NH4(+)</text>
        <dbReference type="Rhea" id="RHEA:16945"/>
        <dbReference type="Rhea" id="RHEA-COMP:10475"/>
        <dbReference type="Rhea" id="RHEA-COMP:10492"/>
        <dbReference type="ChEBI" id="CHEBI:15636"/>
        <dbReference type="ChEBI" id="CHEBI:28938"/>
        <dbReference type="ChEBI" id="CHEBI:57453"/>
        <dbReference type="ChEBI" id="CHEBI:83100"/>
        <dbReference type="ChEBI" id="CHEBI:83143"/>
        <dbReference type="EC" id="2.1.2.10"/>
    </reaction>
</comment>
<comment type="subunit">
    <text evidence="1">The glycine cleavage system is composed of four proteins: P, T, L and H.</text>
</comment>
<comment type="similarity">
    <text evidence="1">Belongs to the GcvT family.</text>
</comment>
<dbReference type="EC" id="2.1.2.10" evidence="1"/>
<dbReference type="EMBL" id="CP000961">
    <property type="protein sequence ID" value="ACA88226.1"/>
    <property type="molecule type" value="Genomic_DNA"/>
</dbReference>
<dbReference type="RefSeq" id="WP_012326556.1">
    <property type="nucleotide sequence ID" value="NC_010506.1"/>
</dbReference>
<dbReference type="SMR" id="B1KG89"/>
<dbReference type="STRING" id="392500.Swoo_3969"/>
<dbReference type="KEGG" id="swd:Swoo_3969"/>
<dbReference type="eggNOG" id="COG0404">
    <property type="taxonomic scope" value="Bacteria"/>
</dbReference>
<dbReference type="HOGENOM" id="CLU_007884_10_2_6"/>
<dbReference type="Proteomes" id="UP000002168">
    <property type="component" value="Chromosome"/>
</dbReference>
<dbReference type="GO" id="GO:0005829">
    <property type="term" value="C:cytosol"/>
    <property type="evidence" value="ECO:0007669"/>
    <property type="project" value="TreeGrafter"/>
</dbReference>
<dbReference type="GO" id="GO:0005960">
    <property type="term" value="C:glycine cleavage complex"/>
    <property type="evidence" value="ECO:0007669"/>
    <property type="project" value="InterPro"/>
</dbReference>
<dbReference type="GO" id="GO:0004047">
    <property type="term" value="F:aminomethyltransferase activity"/>
    <property type="evidence" value="ECO:0007669"/>
    <property type="project" value="UniProtKB-UniRule"/>
</dbReference>
<dbReference type="GO" id="GO:0008483">
    <property type="term" value="F:transaminase activity"/>
    <property type="evidence" value="ECO:0007669"/>
    <property type="project" value="UniProtKB-KW"/>
</dbReference>
<dbReference type="GO" id="GO:0019464">
    <property type="term" value="P:glycine decarboxylation via glycine cleavage system"/>
    <property type="evidence" value="ECO:0007669"/>
    <property type="project" value="UniProtKB-UniRule"/>
</dbReference>
<dbReference type="FunFam" id="2.40.30.110:FF:000001">
    <property type="entry name" value="Aminomethyltransferase"/>
    <property type="match status" value="1"/>
</dbReference>
<dbReference type="FunFam" id="3.30.70.1400:FF:000001">
    <property type="entry name" value="Aminomethyltransferase"/>
    <property type="match status" value="1"/>
</dbReference>
<dbReference type="FunFam" id="4.10.1250.10:FF:000001">
    <property type="entry name" value="Aminomethyltransferase"/>
    <property type="match status" value="1"/>
</dbReference>
<dbReference type="Gene3D" id="2.40.30.110">
    <property type="entry name" value="Aminomethyltransferase beta-barrel domains"/>
    <property type="match status" value="1"/>
</dbReference>
<dbReference type="Gene3D" id="3.30.70.1400">
    <property type="entry name" value="Aminomethyltransferase beta-barrel domains"/>
    <property type="match status" value="1"/>
</dbReference>
<dbReference type="Gene3D" id="4.10.1250.10">
    <property type="entry name" value="Aminomethyltransferase fragment"/>
    <property type="match status" value="1"/>
</dbReference>
<dbReference type="Gene3D" id="3.30.1360.120">
    <property type="entry name" value="Probable tRNA modification gtpase trme, domain 1"/>
    <property type="match status" value="1"/>
</dbReference>
<dbReference type="HAMAP" id="MF_00259">
    <property type="entry name" value="GcvT"/>
    <property type="match status" value="1"/>
</dbReference>
<dbReference type="InterPro" id="IPR006223">
    <property type="entry name" value="GCS_T"/>
</dbReference>
<dbReference type="InterPro" id="IPR022903">
    <property type="entry name" value="GCS_T_bac"/>
</dbReference>
<dbReference type="InterPro" id="IPR013977">
    <property type="entry name" value="GCST_C"/>
</dbReference>
<dbReference type="InterPro" id="IPR006222">
    <property type="entry name" value="GCV_T_N"/>
</dbReference>
<dbReference type="InterPro" id="IPR028896">
    <property type="entry name" value="GcvT/YgfZ/DmdA"/>
</dbReference>
<dbReference type="InterPro" id="IPR029043">
    <property type="entry name" value="GcvT/YgfZ_C"/>
</dbReference>
<dbReference type="InterPro" id="IPR027266">
    <property type="entry name" value="TrmE/GcvT_dom1"/>
</dbReference>
<dbReference type="NCBIfam" id="TIGR00528">
    <property type="entry name" value="gcvT"/>
    <property type="match status" value="1"/>
</dbReference>
<dbReference type="NCBIfam" id="NF001567">
    <property type="entry name" value="PRK00389.1"/>
    <property type="match status" value="1"/>
</dbReference>
<dbReference type="PANTHER" id="PTHR43757">
    <property type="entry name" value="AMINOMETHYLTRANSFERASE"/>
    <property type="match status" value="1"/>
</dbReference>
<dbReference type="PANTHER" id="PTHR43757:SF2">
    <property type="entry name" value="AMINOMETHYLTRANSFERASE, MITOCHONDRIAL"/>
    <property type="match status" value="1"/>
</dbReference>
<dbReference type="Pfam" id="PF01571">
    <property type="entry name" value="GCV_T"/>
    <property type="match status" value="1"/>
</dbReference>
<dbReference type="Pfam" id="PF08669">
    <property type="entry name" value="GCV_T_C"/>
    <property type="match status" value="1"/>
</dbReference>
<dbReference type="PIRSF" id="PIRSF006487">
    <property type="entry name" value="GcvT"/>
    <property type="match status" value="1"/>
</dbReference>
<dbReference type="SUPFAM" id="SSF101790">
    <property type="entry name" value="Aminomethyltransferase beta-barrel domain"/>
    <property type="match status" value="1"/>
</dbReference>
<dbReference type="SUPFAM" id="SSF103025">
    <property type="entry name" value="Folate-binding domain"/>
    <property type="match status" value="1"/>
</dbReference>
<protein>
    <recommendedName>
        <fullName evidence="1">Aminomethyltransferase</fullName>
        <ecNumber evidence="1">2.1.2.10</ecNumber>
    </recommendedName>
    <alternativeName>
        <fullName evidence="1">Glycine cleavage system T protein</fullName>
    </alternativeName>
</protein>
<sequence length="364" mass="39455">MANKTVLFNKHLESDAKMVDFHGWDMPLNYGSQIEEHHAVRQDAGMFDVSHMTVVDVNGTDACAFLRKLLANDVAKLKVPGKALYGGMLDHNAGVIDDLITYYLNDTHYRIVVNSATREKDLAWIAQEVKGFDVVITERPELAMIAVQGPNAKAKAASVFNTAQNAAVEGMKPFFGVQADSLFIATTGYTGETGYEIIVPDSEAEALWLALLEAGVKPCGLGARDTLRLEAGMNLYGLDMDESVNPLAANMGWTIAWEPADRNFNGREALAAIKAAGTEKMVGLIMEAKGVIRPGMSVFFSDSDGVEQQGTITSGTFSPTLGYSIAMARVPRSIADTAEVEMRKKRVPVKVIAPSFVRNGKQAF</sequence>
<reference key="1">
    <citation type="submission" date="2008-02" db="EMBL/GenBank/DDBJ databases">
        <title>Complete sequence of Shewanella woodyi ATCC 51908.</title>
        <authorList>
            <consortium name="US DOE Joint Genome Institute"/>
            <person name="Copeland A."/>
            <person name="Lucas S."/>
            <person name="Lapidus A."/>
            <person name="Glavina del Rio T."/>
            <person name="Dalin E."/>
            <person name="Tice H."/>
            <person name="Bruce D."/>
            <person name="Goodwin L."/>
            <person name="Pitluck S."/>
            <person name="Sims D."/>
            <person name="Brettin T."/>
            <person name="Detter J.C."/>
            <person name="Han C."/>
            <person name="Kuske C.R."/>
            <person name="Schmutz J."/>
            <person name="Larimer F."/>
            <person name="Land M."/>
            <person name="Hauser L."/>
            <person name="Kyrpides N."/>
            <person name="Lykidis A."/>
            <person name="Zhao J.-S."/>
            <person name="Richardson P."/>
        </authorList>
    </citation>
    <scope>NUCLEOTIDE SEQUENCE [LARGE SCALE GENOMIC DNA]</scope>
    <source>
        <strain>ATCC 51908 / MS32</strain>
    </source>
</reference>
<evidence type="ECO:0000255" key="1">
    <source>
        <dbReference type="HAMAP-Rule" id="MF_00259"/>
    </source>
</evidence>
<organism>
    <name type="scientific">Shewanella woodyi (strain ATCC 51908 / MS32)</name>
    <dbReference type="NCBI Taxonomy" id="392500"/>
    <lineage>
        <taxon>Bacteria</taxon>
        <taxon>Pseudomonadati</taxon>
        <taxon>Pseudomonadota</taxon>
        <taxon>Gammaproteobacteria</taxon>
        <taxon>Alteromonadales</taxon>
        <taxon>Shewanellaceae</taxon>
        <taxon>Shewanella</taxon>
    </lineage>
</organism>